<feature type="chain" id="PRO_1000193399" description="DNA repair protein RecO">
    <location>
        <begin position="1"/>
        <end position="268"/>
    </location>
</feature>
<evidence type="ECO:0000255" key="1">
    <source>
        <dbReference type="HAMAP-Rule" id="MF_00201"/>
    </source>
</evidence>
<reference key="1">
    <citation type="journal article" date="2009" name="Nat. Genet.">
        <title>Comparative genomic and phylogeographic analysis of Mycobacterium leprae.</title>
        <authorList>
            <person name="Monot M."/>
            <person name="Honore N."/>
            <person name="Garnier T."/>
            <person name="Zidane N."/>
            <person name="Sherafi D."/>
            <person name="Paniz-Mondolfi A."/>
            <person name="Matsuoka M."/>
            <person name="Taylor G.M."/>
            <person name="Donoghue H.D."/>
            <person name="Bouwman A."/>
            <person name="Mays S."/>
            <person name="Watson C."/>
            <person name="Lockwood D."/>
            <person name="Khamispour A."/>
            <person name="Dowlati Y."/>
            <person name="Jianping S."/>
            <person name="Rea T.H."/>
            <person name="Vera-Cabrera L."/>
            <person name="Stefani M.M."/>
            <person name="Banu S."/>
            <person name="Macdonald M."/>
            <person name="Sapkota B.R."/>
            <person name="Spencer J.S."/>
            <person name="Thomas J."/>
            <person name="Harshman K."/>
            <person name="Singh P."/>
            <person name="Busso P."/>
            <person name="Gattiker A."/>
            <person name="Rougemont J."/>
            <person name="Brennan P.J."/>
            <person name="Cole S.T."/>
        </authorList>
    </citation>
    <scope>NUCLEOTIDE SEQUENCE [LARGE SCALE GENOMIC DNA]</scope>
    <source>
        <strain>Br4923</strain>
    </source>
</reference>
<name>RECO_MYCLB</name>
<keyword id="KW-0227">DNA damage</keyword>
<keyword id="KW-0233">DNA recombination</keyword>
<keyword id="KW-0234">DNA repair</keyword>
<accession>B8ZUT3</accession>
<gene>
    <name evidence="1" type="primary">recO</name>
    <name type="ordered locus">MLBr00633</name>
</gene>
<organism>
    <name type="scientific">Mycobacterium leprae (strain Br4923)</name>
    <dbReference type="NCBI Taxonomy" id="561304"/>
    <lineage>
        <taxon>Bacteria</taxon>
        <taxon>Bacillati</taxon>
        <taxon>Actinomycetota</taxon>
        <taxon>Actinomycetes</taxon>
        <taxon>Mycobacteriales</taxon>
        <taxon>Mycobacteriaceae</taxon>
        <taxon>Mycobacterium</taxon>
    </lineage>
</organism>
<proteinExistence type="inferred from homology"/>
<sequence length="268" mass="29377">MRLYRDWALVLRQHNLGEADRIVTLLTRDHGLVRAVAKGVRRTRSKFGARLEPFAYIDAQLHPGRNLDIVTQVVSIDAFATDIVSDYGRYTCGCAMLETAERLAGEERAPAPTLHRLTVSALRAVADGNRPRDLLLDAYLLRAMGIAGWAPALTACARCATPGPHRAFHIAAGGSVCVHCRPAGSTTPPRGVLELMSALHDGDWGTAQQAPQSHRSYASGLVAAHLQWHLERQLKTLPLVERTHQAYQVDRSIAERRAALVRQDMACG</sequence>
<comment type="function">
    <text evidence="1">Involved in DNA repair and RecF pathway recombination.</text>
</comment>
<comment type="similarity">
    <text evidence="1">Belongs to the RecO family.</text>
</comment>
<dbReference type="EMBL" id="FM211192">
    <property type="protein sequence ID" value="CAR70726.1"/>
    <property type="molecule type" value="Genomic_DNA"/>
</dbReference>
<dbReference type="SMR" id="B8ZUT3"/>
<dbReference type="KEGG" id="mlb:MLBr00633"/>
<dbReference type="HOGENOM" id="CLU_066632_1_1_11"/>
<dbReference type="Proteomes" id="UP000006900">
    <property type="component" value="Chromosome"/>
</dbReference>
<dbReference type="GO" id="GO:0043590">
    <property type="term" value="C:bacterial nucleoid"/>
    <property type="evidence" value="ECO:0007669"/>
    <property type="project" value="TreeGrafter"/>
</dbReference>
<dbReference type="GO" id="GO:0006310">
    <property type="term" value="P:DNA recombination"/>
    <property type="evidence" value="ECO:0007669"/>
    <property type="project" value="UniProtKB-UniRule"/>
</dbReference>
<dbReference type="GO" id="GO:0006302">
    <property type="term" value="P:double-strand break repair"/>
    <property type="evidence" value="ECO:0007669"/>
    <property type="project" value="TreeGrafter"/>
</dbReference>
<dbReference type="Gene3D" id="2.40.50.140">
    <property type="entry name" value="Nucleic acid-binding proteins"/>
    <property type="match status" value="1"/>
</dbReference>
<dbReference type="Gene3D" id="1.20.1440.120">
    <property type="entry name" value="Recombination protein O, C-terminal domain"/>
    <property type="match status" value="1"/>
</dbReference>
<dbReference type="HAMAP" id="MF_00201">
    <property type="entry name" value="RecO"/>
    <property type="match status" value="1"/>
</dbReference>
<dbReference type="InterPro" id="IPR037278">
    <property type="entry name" value="ARFGAP/RecO"/>
</dbReference>
<dbReference type="InterPro" id="IPR022572">
    <property type="entry name" value="DNA_rep/recomb_RecO_N"/>
</dbReference>
<dbReference type="InterPro" id="IPR012340">
    <property type="entry name" value="NA-bd_OB-fold"/>
</dbReference>
<dbReference type="InterPro" id="IPR003717">
    <property type="entry name" value="RecO"/>
</dbReference>
<dbReference type="InterPro" id="IPR042242">
    <property type="entry name" value="RecO_C"/>
</dbReference>
<dbReference type="NCBIfam" id="TIGR00613">
    <property type="entry name" value="reco"/>
    <property type="match status" value="1"/>
</dbReference>
<dbReference type="PANTHER" id="PTHR33991">
    <property type="entry name" value="DNA REPAIR PROTEIN RECO"/>
    <property type="match status" value="1"/>
</dbReference>
<dbReference type="PANTHER" id="PTHR33991:SF1">
    <property type="entry name" value="DNA REPAIR PROTEIN RECO"/>
    <property type="match status" value="1"/>
</dbReference>
<dbReference type="Pfam" id="PF02565">
    <property type="entry name" value="RecO_C"/>
    <property type="match status" value="1"/>
</dbReference>
<dbReference type="Pfam" id="PF11967">
    <property type="entry name" value="RecO_N"/>
    <property type="match status" value="1"/>
</dbReference>
<dbReference type="SUPFAM" id="SSF57863">
    <property type="entry name" value="ArfGap/RecO-like zinc finger"/>
    <property type="match status" value="1"/>
</dbReference>
<dbReference type="SUPFAM" id="SSF50249">
    <property type="entry name" value="Nucleic acid-binding proteins"/>
    <property type="match status" value="1"/>
</dbReference>
<protein>
    <recommendedName>
        <fullName evidence="1">DNA repair protein RecO</fullName>
    </recommendedName>
    <alternativeName>
        <fullName evidence="1">Recombination protein O</fullName>
    </alternativeName>
</protein>